<reference key="1">
    <citation type="journal article" date="1996" name="Nucleic Acids Res.">
        <title>The gamma subfamily of DNA polymerases: cloning of a developmentally regulated cDNA encoding Xenopus laevis mitochondrial DNA polymerase gamma.</title>
        <authorList>
            <person name="Ye F."/>
            <person name="Carrodeguas J.A."/>
            <person name="Bogenhagen D.F."/>
        </authorList>
    </citation>
    <scope>NUCLEOTIDE SEQUENCE [GENOMIC DNA]</scope>
    <source>
        <strain>SB 1099</strain>
    </source>
</reference>
<protein>
    <recommendedName>
        <fullName>DNA polymerase gamma</fullName>
        <ecNumber>2.7.7.7</ecNumber>
    </recommendedName>
    <alternativeName>
        <fullName>Mitochondrial DNA polymerase catalytic subunit</fullName>
    </alternativeName>
</protein>
<evidence type="ECO:0000305" key="1"/>
<organism>
    <name type="scientific">Komagataella pastoris</name>
    <name type="common">Yeast</name>
    <name type="synonym">Pichia pastoris</name>
    <dbReference type="NCBI Taxonomy" id="4922"/>
    <lineage>
        <taxon>Eukaryota</taxon>
        <taxon>Fungi</taxon>
        <taxon>Dikarya</taxon>
        <taxon>Ascomycota</taxon>
        <taxon>Saccharomycotina</taxon>
        <taxon>Pichiomycetes</taxon>
        <taxon>Pichiales</taxon>
        <taxon>Pichiaceae</taxon>
        <taxon>Komagataella</taxon>
    </lineage>
</organism>
<feature type="chain" id="PRO_0000101276" description="DNA polymerase gamma">
    <location>
        <begin position="1"/>
        <end position="1012"/>
    </location>
</feature>
<keyword id="KW-0235">DNA replication</keyword>
<keyword id="KW-0238">DNA-binding</keyword>
<keyword id="KW-0239">DNA-directed DNA polymerase</keyword>
<keyword id="KW-0460">Magnesium</keyword>
<keyword id="KW-0496">Mitochondrion</keyword>
<keyword id="KW-0548">Nucleotidyltransferase</keyword>
<keyword id="KW-0808">Transferase</keyword>
<sequence>MIIRRFVRHLSTSKSSIRINAVGIQHLAPSLQNQLFGKSSPRLDEDLINMAKRHLKSNNLIGKKSSLNDPIEIQLPSLQGNTLDEHFYKLGSASLEPYNPLIDELLNLNIIEPQFEFAFQSGWTRYAPGEPSEKVPYPLEDSYFFDVETMYKVSQYPVMAVALSDKAWYGWVSPYLTEESTTNDHLIPLNTFETEKFIVGHNVSYDRARALEEYNLKQTKAFWMDTMALHVSVSGMCTRQRGTWIKHNKKEQENTMSVASIKSKVQNEELQELLDSTSIEDPMLEDNPWINKSSLNSLERVAEFYCKIKLKKDIRNSFATEDPDELRGNFDELMQYCAKDVFATGKVFQKVYPKFKKLIPHPVTLAALKDISSCILPTTTKWEDYIETSERLYQESRRMIEKNLHVICEETVKLKDDPTKPWENDPWLSQLDWTIDPIRLTKKGEIHKNQKLPGYPNWYKQLIVKNELKLTTKTRTSPLLLKLAWNGNPLYWIQTQGWCFKVPKNKTEEYEKLNFVMVSLKKLSEDPGFESIRAEDLKNFTFVKVPHPDGPSARVTNCMTKSCLGFFEKGFLNSQYPLAKDALQMAVASSYWTSSRERIMNQFVVFEDDMGYILPQIIPMGTITRRAVENTWLTASNAKKNRLGSELKSLIEAPKGYCFVGADVDSEELWIASLIGDSVFKIHGGTAIGWMTLEGTKNEGTDLHSKTAKILGISRNEAKIFNYGRIYGAGIKFTTTLLKKFNPALSDAEAKATANALYTATKGISGRYDKKSIWYGGSESIIFNRLEAIAEMAHPKTPVLGAGITAPLQKANLSTNNFLTSRINWAIQSSGVDYLHLLIISMDYLIKLFDIDARLCITVHDEIRYLVKEEDKFRAAYALQISNLWTRAMFCQQLGINEVPQSCAFFSAVDLDFVLRKEVDLDCVTPSNPDPIPCGKSLDIYQLLQQEDIKGADFPRTMHLNDVHYRKRTPVIEMFDKAVDDKTRKFMVSLQIAQDKTEFTKWKRSRGELIVH</sequence>
<comment type="function">
    <text>Involved in the replication of mitochondrial DNA.</text>
</comment>
<comment type="catalytic activity">
    <reaction>
        <text>DNA(n) + a 2'-deoxyribonucleoside 5'-triphosphate = DNA(n+1) + diphosphate</text>
        <dbReference type="Rhea" id="RHEA:22508"/>
        <dbReference type="Rhea" id="RHEA-COMP:17339"/>
        <dbReference type="Rhea" id="RHEA-COMP:17340"/>
        <dbReference type="ChEBI" id="CHEBI:33019"/>
        <dbReference type="ChEBI" id="CHEBI:61560"/>
        <dbReference type="ChEBI" id="CHEBI:173112"/>
        <dbReference type="EC" id="2.7.7.7"/>
    </reaction>
</comment>
<comment type="cofactor">
    <cofactor>
        <name>Mg(2+)</name>
        <dbReference type="ChEBI" id="CHEBI:18420"/>
    </cofactor>
</comment>
<comment type="subcellular location">
    <subcellularLocation>
        <location>Mitochondrion</location>
    </subcellularLocation>
</comment>
<comment type="miscellaneous">
    <text>In eukaryotes there are five DNA polymerases: alpha, beta, gamma, delta, and epsilon which are responsible for different reactions of DNA synthesis.</text>
</comment>
<comment type="similarity">
    <text evidence="1">Belongs to the DNA polymerase type-A family.</text>
</comment>
<name>DPOG_PICPA</name>
<proteinExistence type="inferred from homology"/>
<dbReference type="EC" id="2.7.7.7"/>
<dbReference type="EMBL" id="U49510">
    <property type="protein sequence ID" value="AAB17118.1"/>
    <property type="molecule type" value="Genomic_DNA"/>
</dbReference>
<dbReference type="PIR" id="S68259">
    <property type="entry name" value="S68259"/>
</dbReference>
<dbReference type="SMR" id="Q01941"/>
<dbReference type="GO" id="GO:0005760">
    <property type="term" value="C:gamma DNA polymerase complex"/>
    <property type="evidence" value="ECO:0007669"/>
    <property type="project" value="InterPro"/>
</dbReference>
<dbReference type="GO" id="GO:0008408">
    <property type="term" value="F:3'-5' exonuclease activity"/>
    <property type="evidence" value="ECO:0007669"/>
    <property type="project" value="TreeGrafter"/>
</dbReference>
<dbReference type="GO" id="GO:0003677">
    <property type="term" value="F:DNA binding"/>
    <property type="evidence" value="ECO:0007669"/>
    <property type="project" value="UniProtKB-KW"/>
</dbReference>
<dbReference type="GO" id="GO:0003887">
    <property type="term" value="F:DNA-directed DNA polymerase activity"/>
    <property type="evidence" value="ECO:0007669"/>
    <property type="project" value="UniProtKB-KW"/>
</dbReference>
<dbReference type="GO" id="GO:0006264">
    <property type="term" value="P:mitochondrial DNA replication"/>
    <property type="evidence" value="ECO:0007669"/>
    <property type="project" value="InterPro"/>
</dbReference>
<dbReference type="CDD" id="cd08641">
    <property type="entry name" value="DNA_pol_gammaA"/>
    <property type="match status" value="1"/>
</dbReference>
<dbReference type="FunFam" id="1.10.150.20:FF:000035">
    <property type="entry name" value="DNA polymerase gamma, mitochondrial"/>
    <property type="match status" value="1"/>
</dbReference>
<dbReference type="Gene3D" id="3.30.420.390">
    <property type="match status" value="2"/>
</dbReference>
<dbReference type="Gene3D" id="3.30.70.370">
    <property type="match status" value="1"/>
</dbReference>
<dbReference type="Gene3D" id="1.10.150.20">
    <property type="entry name" value="5' to 3' exonuclease, C-terminal subdomain"/>
    <property type="match status" value="1"/>
</dbReference>
<dbReference type="InterPro" id="IPR002297">
    <property type="entry name" value="DNA-dir_DNA_pol_A_mt"/>
</dbReference>
<dbReference type="InterPro" id="IPR001098">
    <property type="entry name" value="DNA-dir_DNA_pol_A_palm_dom"/>
</dbReference>
<dbReference type="InterPro" id="IPR043502">
    <property type="entry name" value="DNA/RNA_pol_sf"/>
</dbReference>
<dbReference type="InterPro" id="IPR041336">
    <property type="entry name" value="DNApol_Exo"/>
</dbReference>
<dbReference type="InterPro" id="IPR047580">
    <property type="entry name" value="POLG_palm_dom"/>
</dbReference>
<dbReference type="InterPro" id="IPR012337">
    <property type="entry name" value="RNaseH-like_sf"/>
</dbReference>
<dbReference type="PANTHER" id="PTHR10267">
    <property type="entry name" value="DNA POLYMERASE SUBUNIT GAMMA-1"/>
    <property type="match status" value="1"/>
</dbReference>
<dbReference type="PANTHER" id="PTHR10267:SF0">
    <property type="entry name" value="DNA POLYMERASE SUBUNIT GAMMA-1"/>
    <property type="match status" value="1"/>
</dbReference>
<dbReference type="Pfam" id="PF00476">
    <property type="entry name" value="DNA_pol_A"/>
    <property type="match status" value="1"/>
</dbReference>
<dbReference type="Pfam" id="PF18136">
    <property type="entry name" value="DNApol_Exo"/>
    <property type="match status" value="1"/>
</dbReference>
<dbReference type="PRINTS" id="PR00867">
    <property type="entry name" value="DNAPOLG"/>
</dbReference>
<dbReference type="SMART" id="SM00482">
    <property type="entry name" value="POLAc"/>
    <property type="match status" value="1"/>
</dbReference>
<dbReference type="SUPFAM" id="SSF56672">
    <property type="entry name" value="DNA/RNA polymerases"/>
    <property type="match status" value="1"/>
</dbReference>
<dbReference type="SUPFAM" id="SSF53098">
    <property type="entry name" value="Ribonuclease H-like"/>
    <property type="match status" value="1"/>
</dbReference>
<gene>
    <name type="primary">MIP1</name>
</gene>
<accession>Q01941</accession>